<evidence type="ECO:0000255" key="1">
    <source>
        <dbReference type="HAMAP-Rule" id="MF_00378"/>
    </source>
</evidence>
<organism>
    <name type="scientific">Staphylococcus aureus (strain COL)</name>
    <dbReference type="NCBI Taxonomy" id="93062"/>
    <lineage>
        <taxon>Bacteria</taxon>
        <taxon>Bacillati</taxon>
        <taxon>Bacillota</taxon>
        <taxon>Bacilli</taxon>
        <taxon>Bacillales</taxon>
        <taxon>Staphylococcaceae</taxon>
        <taxon>Staphylococcus</taxon>
    </lineage>
</organism>
<protein>
    <recommendedName>
        <fullName evidence="1">Exodeoxyribonuclease 7 large subunit</fullName>
        <ecNumber evidence="1">3.1.11.6</ecNumber>
    </recommendedName>
    <alternativeName>
        <fullName evidence="1">Exodeoxyribonuclease VII large subunit</fullName>
        <shortName evidence="1">Exonuclease VII large subunit</shortName>
    </alternativeName>
</protein>
<comment type="function">
    <text evidence="1">Bidirectionally degrades single-stranded DNA into large acid-insoluble oligonucleotides, which are then degraded further into small acid-soluble oligonucleotides.</text>
</comment>
<comment type="catalytic activity">
    <reaction evidence="1">
        <text>Exonucleolytic cleavage in either 5'- to 3'- or 3'- to 5'-direction to yield nucleoside 5'-phosphates.</text>
        <dbReference type="EC" id="3.1.11.6"/>
    </reaction>
</comment>
<comment type="subunit">
    <text evidence="1">Heterooligomer composed of large and small subunits.</text>
</comment>
<comment type="subcellular location">
    <subcellularLocation>
        <location evidence="1">Cytoplasm</location>
    </subcellularLocation>
</comment>
<comment type="similarity">
    <text evidence="1">Belongs to the XseA family.</text>
</comment>
<accession>Q5HFP8</accession>
<proteinExistence type="inferred from homology"/>
<reference key="1">
    <citation type="journal article" date="2005" name="J. Bacteriol.">
        <title>Insights on evolution of virulence and resistance from the complete genome analysis of an early methicillin-resistant Staphylococcus aureus strain and a biofilm-producing methicillin-resistant Staphylococcus epidermidis strain.</title>
        <authorList>
            <person name="Gill S.R."/>
            <person name="Fouts D.E."/>
            <person name="Archer G.L."/>
            <person name="Mongodin E.F."/>
            <person name="DeBoy R.T."/>
            <person name="Ravel J."/>
            <person name="Paulsen I.T."/>
            <person name="Kolonay J.F."/>
            <person name="Brinkac L.M."/>
            <person name="Beanan M.J."/>
            <person name="Dodson R.J."/>
            <person name="Daugherty S.C."/>
            <person name="Madupu R."/>
            <person name="Angiuoli S.V."/>
            <person name="Durkin A.S."/>
            <person name="Haft D.H."/>
            <person name="Vamathevan J.J."/>
            <person name="Khouri H."/>
            <person name="Utterback T.R."/>
            <person name="Lee C."/>
            <person name="Dimitrov G."/>
            <person name="Jiang L."/>
            <person name="Qin H."/>
            <person name="Weidman J."/>
            <person name="Tran K."/>
            <person name="Kang K.H."/>
            <person name="Hance I.R."/>
            <person name="Nelson K.E."/>
            <person name="Fraser C.M."/>
        </authorList>
    </citation>
    <scope>NUCLEOTIDE SEQUENCE [LARGE SCALE GENOMIC DNA]</scope>
    <source>
        <strain>COL</strain>
    </source>
</reference>
<feature type="chain" id="PRO_0000197877" description="Exodeoxyribonuclease 7 large subunit">
    <location>
        <begin position="1"/>
        <end position="445"/>
    </location>
</feature>
<sequence length="445" mass="50894">MSDYLSVSALTKYIKYKFDQDPHLQSVLIKGELSNFKKHSSGHLYFNVKDKESVISAMMFKGSASKLNFEPKEGDEVLLEARVSVFERRGNYQIYVNKMQLDGIGNLYQKLEALKKKLTEEGCFDKANKKSIPKFPKKIAVLTASTGAAIRDIHSTINSRFPLAEQIQISTLVQGEKAKDDIIEKIEYADSLGVDTIIVGRGGGSIEDLWNFNEEAVVRAIYNCKTPIISAVGHETDFTLSDFAADIRAATPTQAAVIATPDQYELLQQIQQYQFTLTRFIKKHLEQQRKHVEHLSSYYKFKQPTLLYDQQIQRRDDLEKRLKQQIQATFEQQRHRLMLLQQRYNLKALLSSVNQEQQNNLQLTNQLVKLLNSKILSYKNDLKNKVENLNNLSPTNTMLRGYAIVNKKDEVITSTKDLTENDQLTLTMKDGLVDAKVTKVRCNND</sequence>
<dbReference type="EC" id="3.1.11.6" evidence="1"/>
<dbReference type="EMBL" id="CP000046">
    <property type="protein sequence ID" value="AAW36760.1"/>
    <property type="molecule type" value="Genomic_DNA"/>
</dbReference>
<dbReference type="RefSeq" id="WP_001286928.1">
    <property type="nucleotide sequence ID" value="NZ_JBGOFO010000003.1"/>
</dbReference>
<dbReference type="SMR" id="Q5HFP8"/>
<dbReference type="KEGG" id="sac:SACOL1568"/>
<dbReference type="HOGENOM" id="CLU_023625_3_1_9"/>
<dbReference type="Proteomes" id="UP000000530">
    <property type="component" value="Chromosome"/>
</dbReference>
<dbReference type="GO" id="GO:0005737">
    <property type="term" value="C:cytoplasm"/>
    <property type="evidence" value="ECO:0007669"/>
    <property type="project" value="UniProtKB-SubCell"/>
</dbReference>
<dbReference type="GO" id="GO:0009318">
    <property type="term" value="C:exodeoxyribonuclease VII complex"/>
    <property type="evidence" value="ECO:0007669"/>
    <property type="project" value="InterPro"/>
</dbReference>
<dbReference type="GO" id="GO:0008855">
    <property type="term" value="F:exodeoxyribonuclease VII activity"/>
    <property type="evidence" value="ECO:0007669"/>
    <property type="project" value="UniProtKB-UniRule"/>
</dbReference>
<dbReference type="GO" id="GO:0003676">
    <property type="term" value="F:nucleic acid binding"/>
    <property type="evidence" value="ECO:0007669"/>
    <property type="project" value="InterPro"/>
</dbReference>
<dbReference type="GO" id="GO:0006308">
    <property type="term" value="P:DNA catabolic process"/>
    <property type="evidence" value="ECO:0007669"/>
    <property type="project" value="UniProtKB-UniRule"/>
</dbReference>
<dbReference type="CDD" id="cd04489">
    <property type="entry name" value="ExoVII_LU_OBF"/>
    <property type="match status" value="1"/>
</dbReference>
<dbReference type="HAMAP" id="MF_00378">
    <property type="entry name" value="Exonuc_7_L"/>
    <property type="match status" value="1"/>
</dbReference>
<dbReference type="InterPro" id="IPR003753">
    <property type="entry name" value="Exonuc_VII_L"/>
</dbReference>
<dbReference type="InterPro" id="IPR020579">
    <property type="entry name" value="Exonuc_VII_lsu_C"/>
</dbReference>
<dbReference type="InterPro" id="IPR025824">
    <property type="entry name" value="OB-fold_nuc-bd_dom"/>
</dbReference>
<dbReference type="NCBIfam" id="TIGR00237">
    <property type="entry name" value="xseA"/>
    <property type="match status" value="1"/>
</dbReference>
<dbReference type="PANTHER" id="PTHR30008">
    <property type="entry name" value="EXODEOXYRIBONUCLEASE 7 LARGE SUBUNIT"/>
    <property type="match status" value="1"/>
</dbReference>
<dbReference type="PANTHER" id="PTHR30008:SF0">
    <property type="entry name" value="EXODEOXYRIBONUCLEASE 7 LARGE SUBUNIT"/>
    <property type="match status" value="1"/>
</dbReference>
<dbReference type="Pfam" id="PF02601">
    <property type="entry name" value="Exonuc_VII_L"/>
    <property type="match status" value="1"/>
</dbReference>
<dbReference type="Pfam" id="PF13742">
    <property type="entry name" value="tRNA_anti_2"/>
    <property type="match status" value="1"/>
</dbReference>
<gene>
    <name evidence="1" type="primary">xseA</name>
    <name type="ordered locus">SACOL1568</name>
</gene>
<name>EX7L_STAAC</name>
<keyword id="KW-0963">Cytoplasm</keyword>
<keyword id="KW-0269">Exonuclease</keyword>
<keyword id="KW-0378">Hydrolase</keyword>
<keyword id="KW-0540">Nuclease</keyword>